<feature type="chain" id="PRO_1000086673" description="Large ribosomal subunit protein uL18">
    <location>
        <begin position="1"/>
        <end position="117"/>
    </location>
</feature>
<organism>
    <name type="scientific">Neisseria meningitidis serogroup C (strain 053442)</name>
    <dbReference type="NCBI Taxonomy" id="374833"/>
    <lineage>
        <taxon>Bacteria</taxon>
        <taxon>Pseudomonadati</taxon>
        <taxon>Pseudomonadota</taxon>
        <taxon>Betaproteobacteria</taxon>
        <taxon>Neisseriales</taxon>
        <taxon>Neisseriaceae</taxon>
        <taxon>Neisseria</taxon>
    </lineage>
</organism>
<sequence length="117" mass="12798">MDKHTTRLRRARKTRARIADLKMVRLCVFRSNNHIYAQVISAEGDKVLAQASTLEAEVRGSLKSGSNVEAAAIVGKRIAEKAKAAGVEKVAFDRSGFQYHGRVKALAEAARENGLSF</sequence>
<reference key="1">
    <citation type="journal article" date="2008" name="Genomics">
        <title>Characterization of ST-4821 complex, a unique Neisseria meningitidis clone.</title>
        <authorList>
            <person name="Peng J."/>
            <person name="Yang L."/>
            <person name="Yang F."/>
            <person name="Yang J."/>
            <person name="Yan Y."/>
            <person name="Nie H."/>
            <person name="Zhang X."/>
            <person name="Xiong Z."/>
            <person name="Jiang Y."/>
            <person name="Cheng F."/>
            <person name="Xu X."/>
            <person name="Chen S."/>
            <person name="Sun L."/>
            <person name="Li W."/>
            <person name="Shen Y."/>
            <person name="Shao Z."/>
            <person name="Liang X."/>
            <person name="Xu J."/>
            <person name="Jin Q."/>
        </authorList>
    </citation>
    <scope>NUCLEOTIDE SEQUENCE [LARGE SCALE GENOMIC DNA]</scope>
    <source>
        <strain>053442</strain>
    </source>
</reference>
<gene>
    <name evidence="1" type="primary">rplR</name>
    <name type="ordered locus">NMCC_1991</name>
</gene>
<dbReference type="EMBL" id="CP000381">
    <property type="protein sequence ID" value="ABX74114.1"/>
    <property type="molecule type" value="Genomic_DNA"/>
</dbReference>
<dbReference type="RefSeq" id="WP_002215441.1">
    <property type="nucleotide sequence ID" value="NC_010120.1"/>
</dbReference>
<dbReference type="SMR" id="A9M3V0"/>
<dbReference type="GeneID" id="93387233"/>
<dbReference type="KEGG" id="nmn:NMCC_1991"/>
<dbReference type="HOGENOM" id="CLU_098841_0_1_4"/>
<dbReference type="Proteomes" id="UP000001177">
    <property type="component" value="Chromosome"/>
</dbReference>
<dbReference type="GO" id="GO:0022625">
    <property type="term" value="C:cytosolic large ribosomal subunit"/>
    <property type="evidence" value="ECO:0007669"/>
    <property type="project" value="TreeGrafter"/>
</dbReference>
<dbReference type="GO" id="GO:0008097">
    <property type="term" value="F:5S rRNA binding"/>
    <property type="evidence" value="ECO:0007669"/>
    <property type="project" value="TreeGrafter"/>
</dbReference>
<dbReference type="GO" id="GO:0003735">
    <property type="term" value="F:structural constituent of ribosome"/>
    <property type="evidence" value="ECO:0007669"/>
    <property type="project" value="InterPro"/>
</dbReference>
<dbReference type="GO" id="GO:0006412">
    <property type="term" value="P:translation"/>
    <property type="evidence" value="ECO:0007669"/>
    <property type="project" value="UniProtKB-UniRule"/>
</dbReference>
<dbReference type="CDD" id="cd00432">
    <property type="entry name" value="Ribosomal_L18_L5e"/>
    <property type="match status" value="1"/>
</dbReference>
<dbReference type="FunFam" id="3.30.420.100:FF:000001">
    <property type="entry name" value="50S ribosomal protein L18"/>
    <property type="match status" value="1"/>
</dbReference>
<dbReference type="Gene3D" id="3.30.420.100">
    <property type="match status" value="1"/>
</dbReference>
<dbReference type="HAMAP" id="MF_01337_B">
    <property type="entry name" value="Ribosomal_uL18_B"/>
    <property type="match status" value="1"/>
</dbReference>
<dbReference type="InterPro" id="IPR004389">
    <property type="entry name" value="Ribosomal_uL18_bac-type"/>
</dbReference>
<dbReference type="InterPro" id="IPR005484">
    <property type="entry name" value="Ribosomal_uL18_bac/euk"/>
</dbReference>
<dbReference type="NCBIfam" id="TIGR00060">
    <property type="entry name" value="L18_bact"/>
    <property type="match status" value="1"/>
</dbReference>
<dbReference type="PANTHER" id="PTHR12899">
    <property type="entry name" value="39S RIBOSOMAL PROTEIN L18, MITOCHONDRIAL"/>
    <property type="match status" value="1"/>
</dbReference>
<dbReference type="PANTHER" id="PTHR12899:SF3">
    <property type="entry name" value="LARGE RIBOSOMAL SUBUNIT PROTEIN UL18M"/>
    <property type="match status" value="1"/>
</dbReference>
<dbReference type="Pfam" id="PF00861">
    <property type="entry name" value="Ribosomal_L18p"/>
    <property type="match status" value="1"/>
</dbReference>
<dbReference type="SUPFAM" id="SSF53137">
    <property type="entry name" value="Translational machinery components"/>
    <property type="match status" value="1"/>
</dbReference>
<keyword id="KW-0687">Ribonucleoprotein</keyword>
<keyword id="KW-0689">Ribosomal protein</keyword>
<keyword id="KW-0694">RNA-binding</keyword>
<keyword id="KW-0699">rRNA-binding</keyword>
<protein>
    <recommendedName>
        <fullName evidence="1">Large ribosomal subunit protein uL18</fullName>
    </recommendedName>
    <alternativeName>
        <fullName evidence="2">50S ribosomal protein L18</fullName>
    </alternativeName>
</protein>
<name>RL18_NEIM0</name>
<comment type="function">
    <text evidence="1">This is one of the proteins that bind and probably mediate the attachment of the 5S RNA into the large ribosomal subunit, where it forms part of the central protuberance.</text>
</comment>
<comment type="subunit">
    <text evidence="1">Part of the 50S ribosomal subunit; part of the 5S rRNA/L5/L18/L25 subcomplex. Contacts the 5S and 23S rRNAs.</text>
</comment>
<comment type="similarity">
    <text evidence="1">Belongs to the universal ribosomal protein uL18 family.</text>
</comment>
<accession>A9M3V0</accession>
<proteinExistence type="inferred from homology"/>
<evidence type="ECO:0000255" key="1">
    <source>
        <dbReference type="HAMAP-Rule" id="MF_01337"/>
    </source>
</evidence>
<evidence type="ECO:0000305" key="2"/>